<evidence type="ECO:0000255" key="1">
    <source>
        <dbReference type="PROSITE-ProRule" id="PRU00156"/>
    </source>
</evidence>
<evidence type="ECO:0000305" key="2"/>
<reference key="1">
    <citation type="journal article" date="1992" name="J. Parasitol.">
        <title>Cyclophilin of Schistosoma japonicum.</title>
        <authorList>
            <person name="Argaet V.P."/>
            <person name="Mitchell G.F."/>
        </authorList>
    </citation>
    <scope>NUCLEOTIDE SEQUENCE [MRNA]</scope>
    <source>
        <strain>Philippines</strain>
    </source>
</reference>
<comment type="function">
    <text>PPIases accelerate the folding of proteins. It catalyzes the cis-trans isomerization of proline imidic peptide bonds in oligopeptides.</text>
</comment>
<comment type="catalytic activity">
    <reaction>
        <text>[protein]-peptidylproline (omega=180) = [protein]-peptidylproline (omega=0)</text>
        <dbReference type="Rhea" id="RHEA:16237"/>
        <dbReference type="Rhea" id="RHEA-COMP:10747"/>
        <dbReference type="Rhea" id="RHEA-COMP:10748"/>
        <dbReference type="ChEBI" id="CHEBI:83833"/>
        <dbReference type="ChEBI" id="CHEBI:83834"/>
        <dbReference type="EC" id="5.2.1.8"/>
    </reaction>
</comment>
<comment type="activity regulation">
    <text>Binds cyclosporin A (CsA). CsA mediates some of its effects via an inhibitory action on PPIase.</text>
</comment>
<comment type="subcellular location">
    <subcellularLocation>
        <location>Cytoplasm</location>
    </subcellularLocation>
</comment>
<comment type="similarity">
    <text evidence="2">Belongs to the cyclophilin-type PPIase family. PPIase E subfamily.</text>
</comment>
<protein>
    <recommendedName>
        <fullName>Peptidyl-prolyl cis-trans isomerase E</fullName>
        <shortName>PPIase E</shortName>
        <ecNumber>5.2.1.8</ecNumber>
    </recommendedName>
    <alternativeName>
        <fullName>Cyclophilin E</fullName>
    </alternativeName>
    <alternativeName>
        <fullName>Rotamase E</fullName>
    </alternativeName>
</protein>
<sequence length="179" mass="20050">EDVSDDEMRTKKQKRNLPRVFFDIRIGNADRGRIVMELRSDIVPRTAENFRALCTGDRGFGYHNCCFHRVIPQFMCQGGDFVKGDGTGGKSIYGRKFDDENFQLRHEGFGVLSMANSGPNTNGSQFFICTTKCDWLDGKHVVFGRVVDGQNVVKKMESVGSKSGKVKEPVTISRCGELI</sequence>
<accession>Q26516</accession>
<feature type="chain" id="PRO_0000064160" description="Peptidyl-prolyl cis-trans isomerase E">
    <location>
        <begin position="1" status="less than"/>
        <end position="179"/>
    </location>
</feature>
<feature type="domain" description="PPIase cyclophilin-type" evidence="1">
    <location>
        <begin position="21"/>
        <end position="177"/>
    </location>
</feature>
<feature type="non-terminal residue">
    <location>
        <position position="1"/>
    </location>
</feature>
<name>PPIE_SCHJA</name>
<proteinExistence type="evidence at transcript level"/>
<dbReference type="EC" id="5.2.1.8"/>
<dbReference type="EMBL" id="M93420">
    <property type="protein sequence ID" value="AAA29863.1"/>
    <property type="molecule type" value="mRNA"/>
</dbReference>
<dbReference type="SMR" id="Q26516"/>
<dbReference type="GO" id="GO:0005739">
    <property type="term" value="C:mitochondrion"/>
    <property type="evidence" value="ECO:0007669"/>
    <property type="project" value="TreeGrafter"/>
</dbReference>
<dbReference type="GO" id="GO:0016018">
    <property type="term" value="F:cyclosporin A binding"/>
    <property type="evidence" value="ECO:0007669"/>
    <property type="project" value="TreeGrafter"/>
</dbReference>
<dbReference type="GO" id="GO:0003755">
    <property type="term" value="F:peptidyl-prolyl cis-trans isomerase activity"/>
    <property type="evidence" value="ECO:0007669"/>
    <property type="project" value="UniProtKB-KW"/>
</dbReference>
<dbReference type="GO" id="GO:0006457">
    <property type="term" value="P:protein folding"/>
    <property type="evidence" value="ECO:0007669"/>
    <property type="project" value="InterPro"/>
</dbReference>
<dbReference type="CDD" id="cd01926">
    <property type="entry name" value="cyclophilin_ABH_like"/>
    <property type="match status" value="1"/>
</dbReference>
<dbReference type="FunFam" id="2.40.100.10:FF:000013">
    <property type="entry name" value="Peptidyl-prolyl cis-trans isomerase"/>
    <property type="match status" value="1"/>
</dbReference>
<dbReference type="Gene3D" id="2.40.100.10">
    <property type="entry name" value="Cyclophilin-like"/>
    <property type="match status" value="1"/>
</dbReference>
<dbReference type="InterPro" id="IPR029000">
    <property type="entry name" value="Cyclophilin-like_dom_sf"/>
</dbReference>
<dbReference type="InterPro" id="IPR024936">
    <property type="entry name" value="Cyclophilin-type_PPIase"/>
</dbReference>
<dbReference type="InterPro" id="IPR020892">
    <property type="entry name" value="Cyclophilin-type_PPIase_CS"/>
</dbReference>
<dbReference type="InterPro" id="IPR002130">
    <property type="entry name" value="Cyclophilin-type_PPIase_dom"/>
</dbReference>
<dbReference type="PANTHER" id="PTHR11071">
    <property type="entry name" value="PEPTIDYL-PROLYL CIS-TRANS ISOMERASE"/>
    <property type="match status" value="1"/>
</dbReference>
<dbReference type="PANTHER" id="PTHR11071:SF561">
    <property type="entry name" value="PEPTIDYL-PROLYL CIS-TRANS ISOMERASE D-RELATED"/>
    <property type="match status" value="1"/>
</dbReference>
<dbReference type="Pfam" id="PF00160">
    <property type="entry name" value="Pro_isomerase"/>
    <property type="match status" value="1"/>
</dbReference>
<dbReference type="PIRSF" id="PIRSF001467">
    <property type="entry name" value="Peptidylpro_ismrse"/>
    <property type="match status" value="1"/>
</dbReference>
<dbReference type="PRINTS" id="PR00153">
    <property type="entry name" value="CSAPPISMRASE"/>
</dbReference>
<dbReference type="SUPFAM" id="SSF50891">
    <property type="entry name" value="Cyclophilin-like"/>
    <property type="match status" value="1"/>
</dbReference>
<dbReference type="PROSITE" id="PS00170">
    <property type="entry name" value="CSA_PPIASE_1"/>
    <property type="match status" value="1"/>
</dbReference>
<dbReference type="PROSITE" id="PS50072">
    <property type="entry name" value="CSA_PPIASE_2"/>
    <property type="match status" value="1"/>
</dbReference>
<organism>
    <name type="scientific">Schistosoma japonicum</name>
    <name type="common">Blood fluke</name>
    <dbReference type="NCBI Taxonomy" id="6182"/>
    <lineage>
        <taxon>Eukaryota</taxon>
        <taxon>Metazoa</taxon>
        <taxon>Spiralia</taxon>
        <taxon>Lophotrochozoa</taxon>
        <taxon>Platyhelminthes</taxon>
        <taxon>Trematoda</taxon>
        <taxon>Digenea</taxon>
        <taxon>Strigeidida</taxon>
        <taxon>Schistosomatoidea</taxon>
        <taxon>Schistosomatidae</taxon>
        <taxon>Schistosoma</taxon>
    </lineage>
</organism>
<keyword id="KW-0963">Cytoplasm</keyword>
<keyword id="KW-0413">Isomerase</keyword>
<keyword id="KW-0697">Rotamase</keyword>